<gene>
    <name evidence="1" type="primary">PB1</name>
</gene>
<name>PB1F2_I56A1</name>
<accession>Q20P13</accession>
<keyword id="KW-0053">Apoptosis</keyword>
<keyword id="KW-1035">Host cytoplasm</keyword>
<keyword id="KW-1043">Host membrane</keyword>
<keyword id="KW-1045">Host mitochondrion</keyword>
<keyword id="KW-1046">Host mitochondrion inner membrane</keyword>
<keyword id="KW-1048">Host nucleus</keyword>
<keyword id="KW-0945">Host-virus interaction</keyword>
<keyword id="KW-1090">Inhibition of host innate immune response by virus</keyword>
<keyword id="KW-1097">Inhibition of host MAVS by virus</keyword>
<keyword id="KW-1113">Inhibition of host RLR pathway by virus</keyword>
<keyword id="KW-0472">Membrane</keyword>
<keyword id="KW-1119">Modulation of host cell apoptosis by virus</keyword>
<keyword id="KW-0899">Viral immunoevasion</keyword>
<dbReference type="EMBL" id="CY005821">
    <property type="protein sequence ID" value="ABB90229.1"/>
    <property type="molecule type" value="Genomic_RNA"/>
</dbReference>
<dbReference type="SMR" id="Q20P13"/>
<dbReference type="Proteomes" id="UP000008434">
    <property type="component" value="Genome"/>
</dbReference>
<dbReference type="Proteomes" id="UP000108613">
    <property type="component" value="Genome"/>
</dbReference>
<dbReference type="GO" id="GO:0044164">
    <property type="term" value="C:host cell cytosol"/>
    <property type="evidence" value="ECO:0007669"/>
    <property type="project" value="UniProtKB-SubCell"/>
</dbReference>
<dbReference type="GO" id="GO:0044192">
    <property type="term" value="C:host cell mitochondrial inner membrane"/>
    <property type="evidence" value="ECO:0007669"/>
    <property type="project" value="UniProtKB-SubCell"/>
</dbReference>
<dbReference type="GO" id="GO:0042025">
    <property type="term" value="C:host cell nucleus"/>
    <property type="evidence" value="ECO:0007669"/>
    <property type="project" value="UniProtKB-SubCell"/>
</dbReference>
<dbReference type="GO" id="GO:0016020">
    <property type="term" value="C:membrane"/>
    <property type="evidence" value="ECO:0007669"/>
    <property type="project" value="UniProtKB-UniRule"/>
</dbReference>
<dbReference type="GO" id="GO:0052150">
    <property type="term" value="P:symbiont-mediated perturbation of host apoptosis"/>
    <property type="evidence" value="ECO:0007669"/>
    <property type="project" value="UniProtKB-KW"/>
</dbReference>
<dbReference type="GO" id="GO:0039545">
    <property type="term" value="P:symbiont-mediated suppression of host cytoplasmic pattern recognition receptor signaling pathway via inhibition of MAVS activity"/>
    <property type="evidence" value="ECO:0007669"/>
    <property type="project" value="UniProtKB-KW"/>
</dbReference>
<dbReference type="HAMAP" id="MF_04064">
    <property type="entry name" value="INFV_PB1F2"/>
    <property type="match status" value="1"/>
</dbReference>
<dbReference type="InterPro" id="IPR021045">
    <property type="entry name" value="Flu_proapoptotic_PB1-F2"/>
</dbReference>
<dbReference type="Pfam" id="PF11986">
    <property type="entry name" value="PB1-F2"/>
    <property type="match status" value="1"/>
</dbReference>
<organismHost>
    <name type="scientific">Aves</name>
    <dbReference type="NCBI Taxonomy" id="8782"/>
</organismHost>
<organismHost>
    <name type="scientific">Sus scrofa</name>
    <name type="common">Pig</name>
    <dbReference type="NCBI Taxonomy" id="9823"/>
</organismHost>
<reference key="1">
    <citation type="journal article" date="2006" name="Science">
        <title>Large-scale sequence analysis of avian influenza isolates.</title>
        <authorList>
            <person name="Obenauer J.C."/>
            <person name="Denson J."/>
            <person name="Mehta P.K."/>
            <person name="Su X."/>
            <person name="Mukatira S."/>
            <person name="Finkelstein D.B."/>
            <person name="Xu X."/>
            <person name="Wang J."/>
            <person name="Ma J."/>
            <person name="Fan Y."/>
            <person name="Rakestraw K.M."/>
            <person name="Webster R.G."/>
            <person name="Hoffmann E."/>
            <person name="Krauss S."/>
            <person name="Zheng J."/>
            <person name="Zhang Z."/>
            <person name="Naeve C.W."/>
        </authorList>
    </citation>
    <scope>NUCLEOTIDE SEQUENCE [GENOMIC RNA]</scope>
</reference>
<evidence type="ECO:0000255" key="1">
    <source>
        <dbReference type="HAMAP-Rule" id="MF_04064"/>
    </source>
</evidence>
<evidence type="ECO:0000256" key="2">
    <source>
        <dbReference type="SAM" id="MobiDB-lite"/>
    </source>
</evidence>
<proteinExistence type="inferred from homology"/>
<feature type="chain" id="PRO_0000278706" description="Protein PB1-F2">
    <location>
        <begin position="1"/>
        <end position="90"/>
    </location>
</feature>
<feature type="region of interest" description="Disordered" evidence="2">
    <location>
        <begin position="1"/>
        <end position="34"/>
    </location>
</feature>
<feature type="region of interest" description="Mitochondrial targeting sequence" evidence="1">
    <location>
        <begin position="65"/>
        <end position="87"/>
    </location>
</feature>
<feature type="compositionally biased region" description="Polar residues" evidence="2">
    <location>
        <begin position="1"/>
        <end position="20"/>
    </location>
</feature>
<comment type="function">
    <text evidence="1">Plays an important role in promoting lung pathology in both primary viral infection and secondary bacterial infection. Promotes alteration of mitochondrial morphology, dissipation of mitochondrial membrane potential, and cell death. Alternatively, inhibits the production of interferon in the infected cell at the level of host mitochondrial antiviral signaling MAVS. Its level of expression differs greatly depending on which cell type is infected, in a manner that is independent of the levels of expression of other viral proteins. Monocytic cells are more affected than epithelial cells. Seems to disable virus-infected monocytes or other host innate immune cells. During early stage of infection, predisposes the mitochondria to permeability transition through interaction with host SLC25A6/ANT3 and VDAC1. These proteins participate in the formation of the permeability transition pore complex (PTPC) responsible of the release of mitochondrial products that triggers apoptosis.</text>
</comment>
<comment type="subunit">
    <text evidence="1">Oligomer. Interacts with human SLC25A6/ANT3 and VDAC1. Interacts with host MAVS.</text>
</comment>
<comment type="subcellular location">
    <subcellularLocation>
        <location evidence="1">Host mitochondrion inner membrane</location>
    </subcellularLocation>
    <subcellularLocation>
        <location evidence="1">Host nucleus</location>
    </subcellularLocation>
    <subcellularLocation>
        <location evidence="1">Host cytoplasm</location>
        <location evidence="1">Host cytosol</location>
    </subcellularLocation>
    <text evidence="1">Inner mitochondrial membrane in most cells types. Otherwise is detected in the nucleus and cytosol.</text>
</comment>
<comment type="miscellaneous">
    <text>Is not encoded in all strains, and seems to be dispensable for replication.</text>
</comment>
<comment type="similarity">
    <text evidence="1">Belongs to the influenza viruses PB1-F2 family.</text>
</comment>
<organism>
    <name type="scientific">Influenza A virus (strain A/Duck/Czechoslovakia/1956 H4N6)</name>
    <dbReference type="NCBI Taxonomy" id="385590"/>
    <lineage>
        <taxon>Viruses</taxon>
        <taxon>Riboviria</taxon>
        <taxon>Orthornavirae</taxon>
        <taxon>Negarnaviricota</taxon>
        <taxon>Polyploviricotina</taxon>
        <taxon>Insthoviricetes</taxon>
        <taxon>Articulavirales</taxon>
        <taxon>Orthomyxoviridae</taxon>
        <taxon>Alphainfluenzavirus</taxon>
        <taxon>Alphainfluenzavirus influenzae</taxon>
        <taxon>Influenza A virus</taxon>
    </lineage>
</organism>
<sequence length="90" mass="10851">MEQEQDTPWTQSTEHINTQKGGSGQQTRKLERPNSTQLMDHYLRTMNQVDMHKQTASWKQWLSLKDPTQESLKIHVLKRWKLFNKQEWTN</sequence>
<protein>
    <recommendedName>
        <fullName evidence="1">Protein PB1-F2</fullName>
    </recommendedName>
</protein>